<sequence>MELPIYYPLGLGALLFGLGLWGALTQKNAVRILMFIEIMLNGVNLNLITFSRYYWQTSPEMAARAPILTLFVMTVAAAEASVGLAIILAMVRNRGVVEVDKATLLKG</sequence>
<organism>
    <name type="scientific">Symbiobacterium thermophilum (strain DSM 24528 / JCM 14929 / IAM 14863 / T)</name>
    <dbReference type="NCBI Taxonomy" id="292459"/>
    <lineage>
        <taxon>Bacteria</taxon>
        <taxon>Bacillati</taxon>
        <taxon>Bacillota</taxon>
        <taxon>Clostridia</taxon>
        <taxon>Eubacteriales</taxon>
        <taxon>Symbiobacteriaceae</taxon>
        <taxon>Symbiobacterium</taxon>
    </lineage>
</organism>
<comment type="function">
    <text evidence="1">NDH-1 shuttles electrons from NADH, via FMN and iron-sulfur (Fe-S) centers, to quinones in the respiratory chain. The immediate electron acceptor for the enzyme in this species is believed to be a menaquinone. Couples the redox reaction to proton translocation (for every two electrons transferred, four hydrogen ions are translocated across the cytoplasmic membrane), and thus conserves the redox energy in a proton gradient.</text>
</comment>
<comment type="catalytic activity">
    <reaction evidence="1">
        <text>a quinone + NADH + 5 H(+)(in) = a quinol + NAD(+) + 4 H(+)(out)</text>
        <dbReference type="Rhea" id="RHEA:57888"/>
        <dbReference type="ChEBI" id="CHEBI:15378"/>
        <dbReference type="ChEBI" id="CHEBI:24646"/>
        <dbReference type="ChEBI" id="CHEBI:57540"/>
        <dbReference type="ChEBI" id="CHEBI:57945"/>
        <dbReference type="ChEBI" id="CHEBI:132124"/>
    </reaction>
</comment>
<comment type="subunit">
    <text evidence="1">NDH-1 is composed of 14 different subunits. Subunits NuoA, H, J, K, L, M, N constitute the membrane sector of the complex.</text>
</comment>
<comment type="subcellular location">
    <subcellularLocation>
        <location evidence="1">Cell membrane</location>
        <topology evidence="1">Multi-pass membrane protein</topology>
    </subcellularLocation>
</comment>
<comment type="similarity">
    <text evidence="1">Belongs to the complex I subunit 4L family.</text>
</comment>
<reference key="1">
    <citation type="journal article" date="2004" name="Nucleic Acids Res.">
        <title>Genome sequence of Symbiobacterium thermophilum, an uncultivable bacterium that depends on microbial commensalism.</title>
        <authorList>
            <person name="Ueda K."/>
            <person name="Yamashita A."/>
            <person name="Ishikawa J."/>
            <person name="Shimada M."/>
            <person name="Watsuji T."/>
            <person name="Morimura K."/>
            <person name="Ikeda H."/>
            <person name="Hattori M."/>
            <person name="Beppu T."/>
        </authorList>
    </citation>
    <scope>NUCLEOTIDE SEQUENCE [LARGE SCALE GENOMIC DNA]</scope>
    <source>
        <strain>DSM 24528 / JCM 14929 / IAM 14863 / T</strain>
    </source>
</reference>
<evidence type="ECO:0000255" key="1">
    <source>
        <dbReference type="HAMAP-Rule" id="MF_01456"/>
    </source>
</evidence>
<proteinExistence type="inferred from homology"/>
<keyword id="KW-1003">Cell membrane</keyword>
<keyword id="KW-0472">Membrane</keyword>
<keyword id="KW-0520">NAD</keyword>
<keyword id="KW-0874">Quinone</keyword>
<keyword id="KW-1185">Reference proteome</keyword>
<keyword id="KW-1278">Translocase</keyword>
<keyword id="KW-0812">Transmembrane</keyword>
<keyword id="KW-1133">Transmembrane helix</keyword>
<keyword id="KW-0813">Transport</keyword>
<dbReference type="EC" id="7.1.1.-" evidence="1"/>
<dbReference type="EMBL" id="AP006840">
    <property type="protein sequence ID" value="BAD41755.1"/>
    <property type="molecule type" value="Genomic_DNA"/>
</dbReference>
<dbReference type="RefSeq" id="WP_011196889.1">
    <property type="nucleotide sequence ID" value="NC_006177.1"/>
</dbReference>
<dbReference type="SMR" id="Q67KP3"/>
<dbReference type="STRING" id="292459.STH2770"/>
<dbReference type="KEGG" id="sth:STH2770"/>
<dbReference type="eggNOG" id="COG0713">
    <property type="taxonomic scope" value="Bacteria"/>
</dbReference>
<dbReference type="HOGENOM" id="CLU_144724_1_1_9"/>
<dbReference type="OrthoDB" id="9810120at2"/>
<dbReference type="Proteomes" id="UP000000417">
    <property type="component" value="Chromosome"/>
</dbReference>
<dbReference type="GO" id="GO:0030964">
    <property type="term" value="C:NADH dehydrogenase complex"/>
    <property type="evidence" value="ECO:0007669"/>
    <property type="project" value="TreeGrafter"/>
</dbReference>
<dbReference type="GO" id="GO:0005886">
    <property type="term" value="C:plasma membrane"/>
    <property type="evidence" value="ECO:0007669"/>
    <property type="project" value="UniProtKB-SubCell"/>
</dbReference>
<dbReference type="GO" id="GO:0050136">
    <property type="term" value="F:NADH:ubiquinone reductase (non-electrogenic) activity"/>
    <property type="evidence" value="ECO:0007669"/>
    <property type="project" value="UniProtKB-UniRule"/>
</dbReference>
<dbReference type="GO" id="GO:0048038">
    <property type="term" value="F:quinone binding"/>
    <property type="evidence" value="ECO:0007669"/>
    <property type="project" value="UniProtKB-KW"/>
</dbReference>
<dbReference type="GO" id="GO:0042773">
    <property type="term" value="P:ATP synthesis coupled electron transport"/>
    <property type="evidence" value="ECO:0007669"/>
    <property type="project" value="InterPro"/>
</dbReference>
<dbReference type="FunFam" id="1.10.287.3510:FF:000001">
    <property type="entry name" value="NADH-quinone oxidoreductase subunit K"/>
    <property type="match status" value="1"/>
</dbReference>
<dbReference type="Gene3D" id="1.10.287.3510">
    <property type="match status" value="1"/>
</dbReference>
<dbReference type="HAMAP" id="MF_01456">
    <property type="entry name" value="NDH1_NuoK"/>
    <property type="match status" value="1"/>
</dbReference>
<dbReference type="InterPro" id="IPR001133">
    <property type="entry name" value="NADH_UbQ_OxRdtase_chain4L/K"/>
</dbReference>
<dbReference type="InterPro" id="IPR039428">
    <property type="entry name" value="NUOK/Mnh_C1-like"/>
</dbReference>
<dbReference type="NCBIfam" id="NF004320">
    <property type="entry name" value="PRK05715.1-2"/>
    <property type="match status" value="1"/>
</dbReference>
<dbReference type="PANTHER" id="PTHR11434:SF16">
    <property type="entry name" value="NADH-UBIQUINONE OXIDOREDUCTASE CHAIN 4L"/>
    <property type="match status" value="1"/>
</dbReference>
<dbReference type="PANTHER" id="PTHR11434">
    <property type="entry name" value="NADH-UBIQUINONE OXIDOREDUCTASE SUBUNIT ND4L"/>
    <property type="match status" value="1"/>
</dbReference>
<dbReference type="Pfam" id="PF00420">
    <property type="entry name" value="Oxidored_q2"/>
    <property type="match status" value="1"/>
</dbReference>
<feature type="chain" id="PRO_0000390259" description="NADH-quinone oxidoreductase subunit K 2">
    <location>
        <begin position="1"/>
        <end position="107"/>
    </location>
</feature>
<feature type="transmembrane region" description="Helical" evidence="1">
    <location>
        <begin position="3"/>
        <end position="23"/>
    </location>
</feature>
<feature type="transmembrane region" description="Helical" evidence="1">
    <location>
        <begin position="30"/>
        <end position="50"/>
    </location>
</feature>
<feature type="transmembrane region" description="Helical" evidence="1">
    <location>
        <begin position="67"/>
        <end position="87"/>
    </location>
</feature>
<name>NUOK2_SYMTH</name>
<gene>
    <name evidence="1" type="primary">nuoK2</name>
    <name type="ordered locus">STH2770</name>
</gene>
<protein>
    <recommendedName>
        <fullName evidence="1">NADH-quinone oxidoreductase subunit K 2</fullName>
        <ecNumber evidence="1">7.1.1.-</ecNumber>
    </recommendedName>
    <alternativeName>
        <fullName evidence="1">NADH dehydrogenase I subunit K 2</fullName>
    </alternativeName>
    <alternativeName>
        <fullName evidence="1">NDH-1 subunit K 2</fullName>
    </alternativeName>
</protein>
<accession>Q67KP3</accession>